<keyword id="KW-0002">3D-structure</keyword>
<keyword id="KW-1072">Activation of host autophagy by virus</keyword>
<keyword id="KW-0053">Apoptosis</keyword>
<keyword id="KW-0067">ATP-binding</keyword>
<keyword id="KW-0167">Capsid protein</keyword>
<keyword id="KW-1170">Fusion of virus membrane with host endosomal membrane</keyword>
<keyword id="KW-1168">Fusion of virus membrane with host membrane</keyword>
<keyword id="KW-0325">Glycoprotein</keyword>
<keyword id="KW-0347">Helicase</keyword>
<keyword id="KW-1035">Host cytoplasm</keyword>
<keyword id="KW-1038">Host endoplasmic reticulum</keyword>
<keyword id="KW-1041">Host lipid droplet</keyword>
<keyword id="KW-1043">Host membrane</keyword>
<keyword id="KW-1045">Host mitochondrion</keyword>
<keyword id="KW-1048">Host nucleus</keyword>
<keyword id="KW-0945">Host-virus interaction</keyword>
<keyword id="KW-0378">Hydrolase</keyword>
<keyword id="KW-1090">Inhibition of host innate immune response by virus</keyword>
<keyword id="KW-1114">Inhibition of host interferon signaling pathway by virus</keyword>
<keyword id="KW-1097">Inhibition of host MAVS by virus</keyword>
<keyword id="KW-1113">Inhibition of host RLR pathway by virus</keyword>
<keyword id="KW-0922">Interferon antiviral system evasion</keyword>
<keyword id="KW-0407">Ion channel</keyword>
<keyword id="KW-0406">Ion transport</keyword>
<keyword id="KW-0449">Lipoprotein</keyword>
<keyword id="KW-0460">Magnesium</keyword>
<keyword id="KW-0464">Manganese</keyword>
<keyword id="KW-0472">Membrane</keyword>
<keyword id="KW-0479">Metal-binding</keyword>
<keyword id="KW-0511">Multifunctional enzyme</keyword>
<keyword id="KW-0547">Nucleotide-binding</keyword>
<keyword id="KW-0548">Nucleotidyltransferase</keyword>
<keyword id="KW-0553">Oncogene</keyword>
<keyword id="KW-0564">Palmitate</keyword>
<keyword id="KW-0597">Phosphoprotein</keyword>
<keyword id="KW-0645">Protease</keyword>
<keyword id="KW-0687">Ribonucleoprotein</keyword>
<keyword id="KW-0694">RNA-binding</keyword>
<keyword id="KW-0696">RNA-directed RNA polymerase</keyword>
<keyword id="KW-0720">Serine protease</keyword>
<keyword id="KW-0729">SH3-binding</keyword>
<keyword id="KW-0788">Thiol protease</keyword>
<keyword id="KW-0804">Transcription</keyword>
<keyword id="KW-0805">Transcription regulation</keyword>
<keyword id="KW-0808">Transferase</keyword>
<keyword id="KW-0812">Transmembrane</keyword>
<keyword id="KW-1133">Transmembrane helix</keyword>
<keyword id="KW-0813">Transport</keyword>
<keyword id="KW-1161">Viral attachment to host cell</keyword>
<keyword id="KW-0261">Viral envelope protein</keyword>
<keyword id="KW-0899">Viral immunoevasion</keyword>
<keyword id="KW-1182">Viral ion channel</keyword>
<keyword id="KW-0543">Viral nucleoprotein</keyword>
<keyword id="KW-1162">Viral penetration into host cytoplasm</keyword>
<keyword id="KW-0693">Viral RNA replication</keyword>
<keyword id="KW-0946">Virion</keyword>
<keyword id="KW-1160">Virus entry into host cell</keyword>
<keyword id="KW-0862">Zinc</keyword>
<organism>
    <name type="scientific">Hepatitis GB virus B</name>
    <name type="common">GBV-B</name>
    <name type="synonym">GB virus B</name>
    <dbReference type="NCBI Taxonomy" id="2847087"/>
    <lineage>
        <taxon>Viruses</taxon>
        <taxon>Riboviria</taxon>
        <taxon>Orthornavirae</taxon>
        <taxon>Kitrinoviricota</taxon>
        <taxon>Flasuviricetes</taxon>
        <taxon>Amarillovirales</taxon>
        <taxon>Flaviviridae</taxon>
        <taxon>Hepacivirus</taxon>
        <taxon>Hepacivirus platyrrhini</taxon>
    </lineage>
</organism>
<proteinExistence type="evidence at protein level"/>
<evidence type="ECO:0000250" key="1"/>
<evidence type="ECO:0000250" key="2">
    <source>
        <dbReference type="UniProtKB" id="P26662"/>
    </source>
</evidence>
<evidence type="ECO:0000250" key="3">
    <source>
        <dbReference type="UniProtKB" id="P26663"/>
    </source>
</evidence>
<evidence type="ECO:0000250" key="4">
    <source>
        <dbReference type="UniProtKB" id="P26664"/>
    </source>
</evidence>
<evidence type="ECO:0000250" key="5">
    <source>
        <dbReference type="UniProtKB" id="P27958"/>
    </source>
</evidence>
<evidence type="ECO:0000250" key="6">
    <source>
        <dbReference type="UniProtKB" id="Q99IB8"/>
    </source>
</evidence>
<evidence type="ECO:0000250" key="7">
    <source>
        <dbReference type="UniProtKB" id="Q9WMX2"/>
    </source>
</evidence>
<evidence type="ECO:0000255" key="8"/>
<evidence type="ECO:0000255" key="9">
    <source>
        <dbReference type="PROSITE-ProRule" id="PRU00539"/>
    </source>
</evidence>
<evidence type="ECO:0000255" key="10">
    <source>
        <dbReference type="PROSITE-ProRule" id="PRU00541"/>
    </source>
</evidence>
<evidence type="ECO:0000255" key="11">
    <source>
        <dbReference type="PROSITE-ProRule" id="PRU00542"/>
    </source>
</evidence>
<evidence type="ECO:0000255" key="12">
    <source>
        <dbReference type="PROSITE-ProRule" id="PRU01030"/>
    </source>
</evidence>
<evidence type="ECO:0000255" key="13">
    <source>
        <dbReference type="PROSITE-ProRule" id="PRU01166"/>
    </source>
</evidence>
<evidence type="ECO:0000256" key="14">
    <source>
        <dbReference type="SAM" id="MobiDB-lite"/>
    </source>
</evidence>
<evidence type="ECO:0000269" key="15">
    <source>
    </source>
</evidence>
<evidence type="ECO:0000269" key="16">
    <source>
    </source>
</evidence>
<evidence type="ECO:0000269" key="17">
    <source>
    </source>
</evidence>
<evidence type="ECO:0000269" key="18">
    <source>
    </source>
</evidence>
<evidence type="ECO:0000305" key="19"/>
<evidence type="ECO:0000305" key="20">
    <source>
    </source>
</evidence>
<evidence type="ECO:0007829" key="21">
    <source>
        <dbReference type="PDB" id="2LZP"/>
    </source>
</evidence>
<evidence type="ECO:0007829" key="22">
    <source>
        <dbReference type="PDB" id="2LZQ"/>
    </source>
</evidence>
<evidence type="ECO:0007829" key="23">
    <source>
        <dbReference type="PDB" id="2MKB"/>
    </source>
</evidence>
<sequence>MPVISTQTSPVPAPRTRKNKQTQASYPVSIKTSVERGQRAKRKVQRDARPRNYKIAGIHDGLQTLAQAALPAHGWGRQDPRHKSRNLGILLDYPLGWIGDVTTHTPLVGPLVAGAVVRPVCQIVRLLEDGVNWATGWFGVHLFVVCLLSLACPCSGARVTDPDTNTTILTNCCQRNQVIYCSPSTCLHEPGCVICADECWVPANPYISHPSNWTGTDSFLADHIDFVMGALVTCDALDIGELCGACVLVGDWLVRHWLIHIDLNETGTCYLEVPTGIDPGFLGFIGWMAGKVEAVIFLTKLASQVPYAIATMFSSVHYLAVGALIYYASRGKWYQLLLALMLYIEATSGNPIRVPTGCSIAEFCSPLMIPCPCHSYLSENVSEVICYSPKWTRPVTLEYNNSISWYPYTIPGARGCMVKFKNNTWGCCRIRNVPSYCTMGTDAVWNDTRNTYEACGVTPWLTTAWHNGSALKLAILQYPGSKEMFKPHNWMSGHLYFEGSDTPIVYFYDPVNSTLLPPERWARLPGTPPVVRGSWLQVPQGFYSDVKDLATGLITKDKAWKNYQVLYSATGALSLTGVTTKAVVLILLGLCGSKYLILAYLCYLSLCFGRASGYPLRPVLPSQSYLQAGWDVLSKAQVAPFALIFFICCYLRCRLRYAALLGFVPMAAGLPLTFFVAAAAAQPDYDWWVRLLVAGLVLWAGRDRGPRIALLVGPWPLVALLTLLHLATPASAFDTEIIGGLTIPPVVALVVMSRFGFFAHLLPRCALVNSYLWQRWENWFWNVTLRPERFLLVLVCFPGATYDTLVTFCVCHVALLCLTSSAASFFGTDSRVRAHRMLVRLGKCHAWYSHYVLKFFLLVFGENGVFFYKHLHGDVLPNDFASKLPLQEPFFPFEGKARVYRNEGRRLACGDTVDGLPVVARLGDLVFAGLAMPPDGWAITAPFTLQCLSERGTLSAMAVVMTGIDPRTWTGTIFRLGSLATSYMGFVCDNVLYTAHHGSKGRRLAHPTGSIHPITVDAANDQDIYQPPCGAGSLTRCSCGETKGYLVTRLGSLVEVNKSDDPYWCVCGALPMAVAKGSSGAPILCSSGHVIGMFTAARNSGGSVSQIRVRPLVCAGYHPQYTAHATLDTKPTVPNEYSVQILIAPTGSGKSTKLPLSYMQEKYEVLVLNPSVATTASMPKYMHATYGVNPNCYFNGKCTNTGASLTYSTYGMYLTGACSRNYDVIICDECHATDATTVLGIGKVLTEAPSKNVRLVVLATATPPGVIPTPHANITEIQLTDEGTIPFHGKKIKEENLKKGRHLIFEATKKHCDELANELARKGITAVSYYRGCDISKIPEGDCVVVATDALCTGYTGDFDSVYDCSLMVEGTCHVDLDPTFTMGVRVCGVSAIVKGQRRGRTGRGRAGIYYYVDGSCTPSGMVPECNIVEAFDAAKAWYGLSSTEAQTILDTYRTQPGLPAIGANLDEWADLFSMVNPEPSFVNTAKRTADNYVLLTAAQLQLCHQYGYAAPNDAPRWQGARLGKKPCGVLWRLDGADACPGPEPSEVTRYQMCFTEVNTSGTAALAVGVGVAMAYLAIDTFGATCVRRCWSITSVPTGATVAPVVDEEEIVEECASFIPLEAMVAAIDKLKSTITTTSPFTLETALEKLNTFLGPHAATILAIIEYCCGLVTLPDNPFASCVFAFIAGITTPLPHKIKMFLSLFGGAIASKLTDARGALAFMMAGAAGTALGTWTSVGFVFDMLGGYAAASSTACLTFKCLMGEWPTMDQLAGLVYSAFNPAAGVVGVLSACAMFALTTAGPDHWPNRLLTMLARSNTVCNEYFIATRDIRRKILGILEASTPWSVISACIRWLHTPTEDDCGLIAWGLEIWQYVCNFFVICFNVLKAGVQSMVNIPGCPFYSCQKGYKGPWIGSGMLQARCPCGAELIFSVENGFAKLYKGPRTCSNYWRGAVPVNARLCGSARPDPTDWTSLVVNYGVRDYCKYEKLGDHIFVTAVSSPNVCFTQVPPTLRAAVAVDGVQVQCYLGEPKTPWTTSACCYGPDGKGKTVKLPFRVDGHTPGVRMQLNLRDALETNDCNSINNTPSDEAAVSALVFKQELRRTNQLLEAISAGVDTTKLPAPSIEEVVVRKRQFRARTGSLTLPPPPRSVPGVSCPESLQRSDPLEGPSNLPSSPPVLQLAMPMPLLGAGECNPFTAIGCAMTETGGGPDDLPSYPPKKEVSEWSDGSWSTTTTASSYVTGPPYPKIRGKDSTQSAPAKRPTKKKLGKSEFSCSMSYTWTDVISFKTASKVLSATRAITSGFLKQRSLVYVTEPRDAELRKQKVTINRQPLFPPSYHKQVRLAKEKASKVVGVMWDYDEVAAHTPSKSAKSHITGLRGTDVRSGAARKAVLDLQKCVEAGEIPSHYRQTVIVPKEEVFVKTPQKPTKKPPRLISYPHLEMRCVEKMYYGQVAPDVVKAVMGDAYGFVDPRTRVKRLLSMWSPDAVGATCDTVCFDSTITPEDIMVETDIYSAAKLSDQHRAGIHTIARQLYAGGPMIAYDGREIGYRRCRSSGVYTTSSSNSLTCWLKVNAAAEQAGMKNPRFLICGDDCTVIWKSAGADADKQAMRVFASWMKVMGAPQDCVPQPKYSLEELTSCSSNVTSGITKSGKPYYFLTRDPRIPLGRCSAEGLGYNPSAAWIGYLIHHYPCLWVSRVLAVHFMEQMLFEDKLPETVTFDWYGKNYTVPVEDLPSIIAGVHGIEAFSVVRYTNAEILRVSQSLTDMTMPPLRAWRKKARAVLASAKRRGGAHAKLARFLLWHATSRPLPDLDKTSVARYTTFNYCDVYSPEGDVFVTPQRRLQKFLVKYLAVIVFALGLIAVGLAIS</sequence>
<name>POLG_GBVB</name>
<accession>Q69422</accession>
<accession>Q6QLR5</accession>
<accession>Q6QLR6</accession>
<accession>Q6QLR7</accession>
<accession>Q6QLR8</accession>
<accession>Q6QLR9</accession>
<accession>Q6QLS0</accession>
<accession>Q8JKE4</accession>
<accession>Q999T0</accession>
<accession>Q9QEW5</accession>
<dbReference type="EC" id="3.4.22.-" evidence="3"/>
<dbReference type="EC" id="3.4.21.98" evidence="5"/>
<dbReference type="EC" id="3.6.1.15" evidence="15"/>
<dbReference type="EC" id="3.6.4.13" evidence="15"/>
<dbReference type="EC" id="2.7.7.48" evidence="5"/>
<dbReference type="EMBL" id="U22304">
    <property type="protein sequence ID" value="AAC54059.1"/>
    <property type="molecule type" value="Genomic_RNA"/>
</dbReference>
<dbReference type="EMBL" id="AF179612">
    <property type="protein sequence ID" value="AAF01368.1"/>
    <property type="molecule type" value="Genomic_RNA"/>
</dbReference>
<dbReference type="EMBL" id="AJ277947">
    <property type="protein sequence ID" value="CAC33083.1"/>
    <property type="molecule type" value="Genomic_RNA"/>
</dbReference>
<dbReference type="EMBL" id="AJ428955">
    <property type="protein sequence ID" value="CAD21957.1"/>
    <property type="molecule type" value="Genomic_RNA"/>
</dbReference>
<dbReference type="EMBL" id="AY534873">
    <property type="protein sequence ID" value="AAS45125.1"/>
    <property type="molecule type" value="Genomic_RNA"/>
</dbReference>
<dbReference type="EMBL" id="AY534874">
    <property type="protein sequence ID" value="AAS45126.1"/>
    <property type="molecule type" value="Genomic_RNA"/>
</dbReference>
<dbReference type="EMBL" id="AY534875">
    <property type="protein sequence ID" value="AAS45127.1"/>
    <property type="molecule type" value="Genomic_RNA"/>
</dbReference>
<dbReference type="EMBL" id="AY534876">
    <property type="protein sequence ID" value="AAS45128.1"/>
    <property type="molecule type" value="Genomic_RNA"/>
</dbReference>
<dbReference type="EMBL" id="AY534877">
    <property type="protein sequence ID" value="AAS45129.1"/>
    <property type="molecule type" value="Genomic_RNA"/>
</dbReference>
<dbReference type="EMBL" id="AY534878">
    <property type="protein sequence ID" value="AAS45130.1"/>
    <property type="molecule type" value="Genomic_RNA"/>
</dbReference>
<dbReference type="RefSeq" id="NP_056931.1">
    <property type="nucleotide sequence ID" value="NC_001655.1"/>
</dbReference>
<dbReference type="PDB" id="2LZP">
    <property type="method" value="NMR"/>
    <property type="chains" value="A=734-764"/>
</dbReference>
<dbReference type="PDB" id="2LZQ">
    <property type="method" value="NMR"/>
    <property type="chains" value="A=764-789"/>
</dbReference>
<dbReference type="PDB" id="2MKB">
    <property type="method" value="NMR"/>
    <property type="chains" value="A=845-869"/>
</dbReference>
<dbReference type="PDBsum" id="2LZP"/>
<dbReference type="PDBsum" id="2LZQ"/>
<dbReference type="PDBsum" id="2MKB"/>
<dbReference type="BMRB" id="Q69422"/>
<dbReference type="SMR" id="Q69422"/>
<dbReference type="BindingDB" id="Q69422"/>
<dbReference type="ChEMBL" id="CHEMBL5981"/>
<dbReference type="MEROPS" id="S29.002"/>
<dbReference type="TCDB" id="1.A.53.1.11">
    <property type="family name" value="the hepatitis c virus p7 viroporin cation-selective channel (hcv-p7) family"/>
</dbReference>
<dbReference type="GeneID" id="1403460"/>
<dbReference type="KEGG" id="vg:1403460"/>
<dbReference type="PRO" id="PR:Q69422"/>
<dbReference type="Proteomes" id="UP000114117">
    <property type="component" value="Genome"/>
</dbReference>
<dbReference type="Proteomes" id="UP000165726">
    <property type="component" value="Segment"/>
</dbReference>
<dbReference type="Proteomes" id="UP000172018">
    <property type="component" value="Genome"/>
</dbReference>
<dbReference type="GO" id="GO:0044167">
    <property type="term" value="C:host cell endoplasmic reticulum membrane"/>
    <property type="evidence" value="ECO:0007669"/>
    <property type="project" value="UniProtKB-SubCell"/>
</dbReference>
<dbReference type="GO" id="GO:0044186">
    <property type="term" value="C:host cell lipid droplet"/>
    <property type="evidence" value="ECO:0007669"/>
    <property type="project" value="UniProtKB-SubCell"/>
</dbReference>
<dbReference type="GO" id="GO:0033650">
    <property type="term" value="C:host cell mitochondrion"/>
    <property type="evidence" value="ECO:0007669"/>
    <property type="project" value="UniProtKB-SubCell"/>
</dbReference>
<dbReference type="GO" id="GO:0042025">
    <property type="term" value="C:host cell nucleus"/>
    <property type="evidence" value="ECO:0007669"/>
    <property type="project" value="UniProtKB-SubCell"/>
</dbReference>
<dbReference type="GO" id="GO:0044220">
    <property type="term" value="C:host cell perinuclear region of cytoplasm"/>
    <property type="evidence" value="ECO:0007669"/>
    <property type="project" value="UniProtKB-SubCell"/>
</dbReference>
<dbReference type="GO" id="GO:0016020">
    <property type="term" value="C:membrane"/>
    <property type="evidence" value="ECO:0007669"/>
    <property type="project" value="UniProtKB-KW"/>
</dbReference>
<dbReference type="GO" id="GO:0032993">
    <property type="term" value="C:protein-DNA complex"/>
    <property type="evidence" value="ECO:0000314"/>
    <property type="project" value="CAFA"/>
</dbReference>
<dbReference type="GO" id="GO:1990904">
    <property type="term" value="C:ribonucleoprotein complex"/>
    <property type="evidence" value="ECO:0007669"/>
    <property type="project" value="UniProtKB-KW"/>
</dbReference>
<dbReference type="GO" id="GO:0019031">
    <property type="term" value="C:viral envelope"/>
    <property type="evidence" value="ECO:0007669"/>
    <property type="project" value="UniProtKB-KW"/>
</dbReference>
<dbReference type="GO" id="GO:0019013">
    <property type="term" value="C:viral nucleocapsid"/>
    <property type="evidence" value="ECO:0007669"/>
    <property type="project" value="UniProtKB-KW"/>
</dbReference>
<dbReference type="GO" id="GO:0055036">
    <property type="term" value="C:virion membrane"/>
    <property type="evidence" value="ECO:0007669"/>
    <property type="project" value="UniProtKB-SubCell"/>
</dbReference>
<dbReference type="GO" id="GO:0005524">
    <property type="term" value="F:ATP binding"/>
    <property type="evidence" value="ECO:0007669"/>
    <property type="project" value="UniProtKB-KW"/>
</dbReference>
<dbReference type="GO" id="GO:0016887">
    <property type="term" value="F:ATP hydrolysis activity"/>
    <property type="evidence" value="ECO:0007669"/>
    <property type="project" value="RHEA"/>
</dbReference>
<dbReference type="GO" id="GO:0015267">
    <property type="term" value="F:channel activity"/>
    <property type="evidence" value="ECO:0007669"/>
    <property type="project" value="UniProtKB-KW"/>
</dbReference>
<dbReference type="GO" id="GO:0004197">
    <property type="term" value="F:cysteine-type endopeptidase activity"/>
    <property type="evidence" value="ECO:0007669"/>
    <property type="project" value="InterPro"/>
</dbReference>
<dbReference type="GO" id="GO:0003677">
    <property type="term" value="F:DNA binding"/>
    <property type="evidence" value="ECO:0000314"/>
    <property type="project" value="CAFA"/>
</dbReference>
<dbReference type="GO" id="GO:1990814">
    <property type="term" value="F:DNA/DNA annealing activity"/>
    <property type="evidence" value="ECO:0000314"/>
    <property type="project" value="CAFA"/>
</dbReference>
<dbReference type="GO" id="GO:0140691">
    <property type="term" value="F:RNA folding chaperone"/>
    <property type="evidence" value="ECO:0000314"/>
    <property type="project" value="DisProt"/>
</dbReference>
<dbReference type="GO" id="GO:0003724">
    <property type="term" value="F:RNA helicase activity"/>
    <property type="evidence" value="ECO:0007669"/>
    <property type="project" value="UniProtKB-EC"/>
</dbReference>
<dbReference type="GO" id="GO:0033592">
    <property type="term" value="F:RNA strand annealing activity"/>
    <property type="evidence" value="ECO:0000314"/>
    <property type="project" value="CAFA"/>
</dbReference>
<dbReference type="GO" id="GO:0003968">
    <property type="term" value="F:RNA-directed RNA polymerase activity"/>
    <property type="evidence" value="ECO:0007669"/>
    <property type="project" value="UniProtKB-KW"/>
</dbReference>
<dbReference type="GO" id="GO:0004252">
    <property type="term" value="F:serine-type endopeptidase activity"/>
    <property type="evidence" value="ECO:0007669"/>
    <property type="project" value="InterPro"/>
</dbReference>
<dbReference type="GO" id="GO:0017124">
    <property type="term" value="F:SH3 domain binding"/>
    <property type="evidence" value="ECO:0007669"/>
    <property type="project" value="UniProtKB-KW"/>
</dbReference>
<dbReference type="GO" id="GO:0005198">
    <property type="term" value="F:structural molecule activity"/>
    <property type="evidence" value="ECO:0007669"/>
    <property type="project" value="InterPro"/>
</dbReference>
<dbReference type="GO" id="GO:0008270">
    <property type="term" value="F:zinc ion binding"/>
    <property type="evidence" value="ECO:0007669"/>
    <property type="project" value="InterPro"/>
</dbReference>
<dbReference type="GO" id="GO:0039654">
    <property type="term" value="P:fusion of virus membrane with host endosome membrane"/>
    <property type="evidence" value="ECO:0007669"/>
    <property type="project" value="UniProtKB-KW"/>
</dbReference>
<dbReference type="GO" id="GO:0034220">
    <property type="term" value="P:monoatomic ion transmembrane transport"/>
    <property type="evidence" value="ECO:0007669"/>
    <property type="project" value="UniProtKB-KW"/>
</dbReference>
<dbReference type="GO" id="GO:0006508">
    <property type="term" value="P:proteolysis"/>
    <property type="evidence" value="ECO:0007669"/>
    <property type="project" value="UniProtKB-KW"/>
</dbReference>
<dbReference type="GO" id="GO:0043489">
    <property type="term" value="P:RNA stabilization"/>
    <property type="evidence" value="ECO:0000314"/>
    <property type="project" value="CAFA"/>
</dbReference>
<dbReference type="GO" id="GO:0046718">
    <property type="term" value="P:symbiont entry into host cell"/>
    <property type="evidence" value="ECO:0007669"/>
    <property type="project" value="UniProtKB-KW"/>
</dbReference>
<dbReference type="GO" id="GO:0039520">
    <property type="term" value="P:symbiont-mediated activation of host autophagy"/>
    <property type="evidence" value="ECO:0007669"/>
    <property type="project" value="UniProtKB-KW"/>
</dbReference>
<dbReference type="GO" id="GO:0039545">
    <property type="term" value="P:symbiont-mediated suppression of host cytoplasmic pattern recognition receptor signaling pathway via inhibition of MAVS activity"/>
    <property type="evidence" value="ECO:0007669"/>
    <property type="project" value="UniProtKB-KW"/>
</dbReference>
<dbReference type="GO" id="GO:0039502">
    <property type="term" value="P:symbiont-mediated suppression of host type I interferon-mediated signaling pathway"/>
    <property type="evidence" value="ECO:0007669"/>
    <property type="project" value="UniProtKB-KW"/>
</dbReference>
<dbReference type="GO" id="GO:0019087">
    <property type="term" value="P:symbiont-mediated transformation of host cell"/>
    <property type="evidence" value="ECO:0007669"/>
    <property type="project" value="InterPro"/>
</dbReference>
<dbReference type="GO" id="GO:0039694">
    <property type="term" value="P:viral RNA genome replication"/>
    <property type="evidence" value="ECO:0007669"/>
    <property type="project" value="InterPro"/>
</dbReference>
<dbReference type="GO" id="GO:0019062">
    <property type="term" value="P:virion attachment to host cell"/>
    <property type="evidence" value="ECO:0007669"/>
    <property type="project" value="UniProtKB-KW"/>
</dbReference>
<dbReference type="CDD" id="cd23202">
    <property type="entry name" value="Hepacivirus_RdRp"/>
    <property type="match status" value="1"/>
</dbReference>
<dbReference type="DisProt" id="DP00674"/>
<dbReference type="Gene3D" id="2.40.10.120">
    <property type="match status" value="1"/>
</dbReference>
<dbReference type="Gene3D" id="3.30.70.270">
    <property type="match status" value="2"/>
</dbReference>
<dbReference type="Gene3D" id="2.20.25.210">
    <property type="entry name" value="Hepatitis C NS5A, domain 1B"/>
    <property type="match status" value="1"/>
</dbReference>
<dbReference type="Gene3D" id="3.30.160.890">
    <property type="entry name" value="Hepatitis C virus envelope glycoprotein E1, chain C"/>
    <property type="match status" value="1"/>
</dbReference>
<dbReference type="Gene3D" id="3.40.50.300">
    <property type="entry name" value="P-loop containing nucleotide triphosphate hydrolases"/>
    <property type="match status" value="2"/>
</dbReference>
<dbReference type="Gene3D" id="1.10.820.10">
    <property type="entry name" value="RNA Helicase Chain A , domain 3"/>
    <property type="match status" value="1"/>
</dbReference>
<dbReference type="Gene3D" id="2.40.10.10">
    <property type="entry name" value="Trypsin-like serine proteases"/>
    <property type="match status" value="1"/>
</dbReference>
<dbReference type="InterPro" id="IPR043502">
    <property type="entry name" value="DNA/RNA_pol_sf"/>
</dbReference>
<dbReference type="InterPro" id="IPR011492">
    <property type="entry name" value="Flavi_DEAD"/>
</dbReference>
<dbReference type="InterPro" id="IPR002521">
    <property type="entry name" value="HCV_Core_C"/>
</dbReference>
<dbReference type="InterPro" id="IPR002519">
    <property type="entry name" value="HCV_Env"/>
</dbReference>
<dbReference type="InterPro" id="IPR002518">
    <property type="entry name" value="HCV_NS2"/>
</dbReference>
<dbReference type="InterPro" id="IPR000745">
    <property type="entry name" value="HCV_NS4a"/>
</dbReference>
<dbReference type="InterPro" id="IPR001490">
    <property type="entry name" value="HCV_NS4b"/>
</dbReference>
<dbReference type="InterPro" id="IPR002868">
    <property type="entry name" value="HCV_NS5a"/>
</dbReference>
<dbReference type="InterPro" id="IPR013192">
    <property type="entry name" value="HCV_NS5A_1a"/>
</dbReference>
<dbReference type="InterPro" id="IPR013193">
    <property type="entry name" value="HCV_NS5a_1B_dom"/>
</dbReference>
<dbReference type="InterPro" id="IPR014001">
    <property type="entry name" value="Helicase_ATP-bd"/>
</dbReference>
<dbReference type="InterPro" id="IPR004109">
    <property type="entry name" value="HepC_NS3_protease"/>
</dbReference>
<dbReference type="InterPro" id="IPR038170">
    <property type="entry name" value="NS5A_1a_sf"/>
</dbReference>
<dbReference type="InterPro" id="IPR027417">
    <property type="entry name" value="P-loop_NTPase"/>
</dbReference>
<dbReference type="InterPro" id="IPR009003">
    <property type="entry name" value="Peptidase_S1_PA"/>
</dbReference>
<dbReference type="InterPro" id="IPR043504">
    <property type="entry name" value="Peptidase_S1_PA_chymotrypsin"/>
</dbReference>
<dbReference type="InterPro" id="IPR043128">
    <property type="entry name" value="Rev_trsase/Diguanyl_cyclase"/>
</dbReference>
<dbReference type="InterPro" id="IPR007094">
    <property type="entry name" value="RNA-dir_pol_PSvirus"/>
</dbReference>
<dbReference type="InterPro" id="IPR002166">
    <property type="entry name" value="RNA_pol_HCV"/>
</dbReference>
<dbReference type="Pfam" id="PF07652">
    <property type="entry name" value="Flavi_DEAD"/>
    <property type="match status" value="1"/>
</dbReference>
<dbReference type="Pfam" id="PF01542">
    <property type="entry name" value="HCV_core"/>
    <property type="match status" value="1"/>
</dbReference>
<dbReference type="Pfam" id="PF01539">
    <property type="entry name" value="HCV_env"/>
    <property type="match status" value="1"/>
</dbReference>
<dbReference type="Pfam" id="PF01006">
    <property type="entry name" value="HCV_NS4a"/>
    <property type="match status" value="1"/>
</dbReference>
<dbReference type="Pfam" id="PF01001">
    <property type="entry name" value="HCV_NS4b"/>
    <property type="match status" value="1"/>
</dbReference>
<dbReference type="Pfam" id="PF01506">
    <property type="entry name" value="HCV_NS5a"/>
    <property type="match status" value="1"/>
</dbReference>
<dbReference type="Pfam" id="PF08300">
    <property type="entry name" value="HCV_NS5a_1a"/>
    <property type="match status" value="1"/>
</dbReference>
<dbReference type="Pfam" id="PF08301">
    <property type="entry name" value="HCV_NS5a_1b"/>
    <property type="match status" value="1"/>
</dbReference>
<dbReference type="Pfam" id="PF02907">
    <property type="entry name" value="Peptidase_S29"/>
    <property type="match status" value="1"/>
</dbReference>
<dbReference type="Pfam" id="PF00998">
    <property type="entry name" value="RdRP_3"/>
    <property type="match status" value="1"/>
</dbReference>
<dbReference type="SMART" id="SM00487">
    <property type="entry name" value="DEXDc"/>
    <property type="match status" value="1"/>
</dbReference>
<dbReference type="SUPFAM" id="SSF56672">
    <property type="entry name" value="DNA/RNA polymerases"/>
    <property type="match status" value="1"/>
</dbReference>
<dbReference type="SUPFAM" id="SSF52540">
    <property type="entry name" value="P-loop containing nucleoside triphosphate hydrolases"/>
    <property type="match status" value="2"/>
</dbReference>
<dbReference type="SUPFAM" id="SSF50494">
    <property type="entry name" value="Trypsin-like serine proteases"/>
    <property type="match status" value="1"/>
</dbReference>
<dbReference type="PROSITE" id="PS51693">
    <property type="entry name" value="HCV_NS2_PRO"/>
    <property type="match status" value="1"/>
</dbReference>
<dbReference type="PROSITE" id="PS51192">
    <property type="entry name" value="HELICASE_ATP_BIND_1"/>
    <property type="match status" value="1"/>
</dbReference>
<dbReference type="PROSITE" id="PS51194">
    <property type="entry name" value="HELICASE_CTER"/>
    <property type="match status" value="1"/>
</dbReference>
<dbReference type="PROSITE" id="PS51822">
    <property type="entry name" value="HV_PV_NS3_PRO"/>
    <property type="match status" value="1"/>
</dbReference>
<dbReference type="PROSITE" id="PS50507">
    <property type="entry name" value="RDRP_SSRNA_POS"/>
    <property type="match status" value="1"/>
</dbReference>
<organismHost>
    <name type="scientific">Callithrix jacchus</name>
    <name type="common">White-tufted-ear marmoset</name>
    <dbReference type="NCBI Taxonomy" id="9483"/>
</organismHost>
<organismHost>
    <name type="scientific">Saguinus</name>
    <dbReference type="NCBI Taxonomy" id="9486"/>
</organismHost>
<reference key="1">
    <citation type="journal article" date="1995" name="Proc. Natl. Acad. Sci. U.S.A.">
        <title>Identification of two flavivirus-like genomes in the GB hepatitis agent.</title>
        <authorList>
            <person name="Simons J.N."/>
            <person name="Pilot-Matias T.J."/>
            <person name="Leary T.P."/>
            <person name="Dawson G.J."/>
            <person name="Desai S.M."/>
            <person name="Schlauder G.G."/>
            <person name="Muerhoff A.S."/>
            <person name="Erker J.C."/>
            <person name="Buijk S.L."/>
            <person name="Chalmers M.L."/>
            <person name="van Sant C.L."/>
            <person name="Mushahwar I.K."/>
        </authorList>
    </citation>
    <scope>NUCLEOTIDE SEQUENCE [GENOMIC RNA]</scope>
</reference>
<reference key="2">
    <citation type="journal article" date="1999" name="Virology">
        <title>Toward a surrogate model for hepatitis C virus: an infectious molecular clone of the GB virus-B hepatitis agent.</title>
        <authorList>
            <person name="Bukh J."/>
            <person name="Apgar C.L."/>
            <person name="Yanagi M."/>
        </authorList>
    </citation>
    <scope>NUCLEOTIDE SEQUENCE [GENOMIC RNA]</scope>
</reference>
<reference key="3">
    <citation type="journal article" date="2001" name="J. Gen. Virol.">
        <title>Generation of infectious and transmissible virions from a GB virus B full-length consensus clone in tamarins.</title>
        <authorList>
            <person name="Sbardellati A."/>
            <person name="Scarselli E."/>
            <person name="Verschoor E."/>
            <person name="De Tomassi A."/>
            <person name="Lazzaro D."/>
            <person name="Traboni C."/>
        </authorList>
    </citation>
    <scope>NUCLEOTIDE SEQUENCE [GENOMIC RNA]</scope>
</reference>
<reference key="4">
    <citation type="journal article" date="2002" name="J. Virol.">
        <title>Cell clones selected from the Huh7 human hepatoma cell line support efficient replication of a subgenomic GB virus B replicon.</title>
        <authorList>
            <person name="De Tomassi A."/>
            <person name="Pizzuti M."/>
            <person name="Graziani R."/>
            <person name="Sbardellati A."/>
            <person name="Altamura S."/>
            <person name="Paonessa G."/>
            <person name="Traboni C."/>
        </authorList>
    </citation>
    <scope>NUCLEOTIDE SEQUENCE [GENOMIC RNA] OF 940-2864</scope>
</reference>
<reference key="5">
    <citation type="submission" date="2004-01" db="EMBL/GenBank/DDBJ databases">
        <authorList>
            <person name="Viazov S."/>
            <person name="Kioureguian K."/>
        </authorList>
    </citation>
    <scope>NUCLEOTIDE SEQUENCE [GENOMIC RNA] OF 1864-2274</scope>
</reference>
<reference key="6">
    <citation type="journal article" date="1999" name="Virology">
        <title>Nucleoside triphosphatase and RNA helicase activities associated with GB virus B nonstructural protein 3.</title>
        <authorList>
            <person name="Zhong W."/>
            <person name="Ingravallo P."/>
            <person name="Wright-Minogue J."/>
            <person name="Skelton A."/>
            <person name="Uss A.S."/>
            <person name="Chase R."/>
            <person name="Yao N."/>
            <person name="Lau J.Y.N."/>
            <person name="Hong Z."/>
        </authorList>
    </citation>
    <scope>CATALYTIC ACTIVITY (SERINE PROTEASE/HELICASE NS3)</scope>
    <scope>MUTAGENESIS OF LYS-1150</scope>
    <scope>COFACTOR (SERINE PROTEASE/HELICASE NS3)</scope>
    <scope>BIOPHYSICOCHEMICAL PROPERTIES (SERINE PROTEASE/HELICASE NS3)</scope>
</reference>
<reference key="7">
    <citation type="journal article" date="2004" name="J. Biol. Chem.">
        <title>Characterization of GB virus B polyprotein processing reveals the existence of a novel 13-kDa protein with partial homology to hepatitis C virus p7 protein.</title>
        <authorList>
            <person name="Ghibaudo D."/>
            <person name="Cohen L."/>
            <person name="Penin F."/>
            <person name="Martin A."/>
        </authorList>
    </citation>
    <scope>PROTEOLYTIC PROCESSING (GENOME POLYPROTEIN)</scope>
</reference>
<reference key="8">
    <citation type="journal article" date="2006" name="Proc. Natl. Acad. Sci. U.S.A.">
        <title>Functional analyses of GB virus B p13 protein: development of a recombinant GB virus B hepatitis virus with a p7 protein.</title>
        <authorList>
            <person name="Takikawa S."/>
            <person name="Engle R.E."/>
            <person name="Emerson S.U."/>
            <person name="Purcell R.H."/>
            <person name="St Claire M."/>
            <person name="Bukh J."/>
        </authorList>
    </citation>
    <scope>FUNCTION (P13)</scope>
    <scope>PROTEOLYTIC PROCESSING (GENOME POLYPROTEIN)</scope>
    <scope>MUTAGENESIS OF GLY-613; 730-ALA--ALA-732 AND GLY-669</scope>
</reference>
<reference key="9">
    <citation type="journal article" date="2007" name="J. Virol.">
        <title>GB virus B disrupts RIG-I signaling by NS3/4A-mediated cleavage of the adaptor protein MAVS.</title>
        <authorList>
            <person name="Chen Z."/>
            <person name="Benureau Y."/>
            <person name="Rijnbrand R."/>
            <person name="Yi J."/>
            <person name="Wang T."/>
            <person name="Warter L."/>
            <person name="Lanford R.E."/>
            <person name="Weinman S.A."/>
            <person name="Lemon S.M."/>
            <person name="Martin A."/>
            <person name="Li K."/>
        </authorList>
    </citation>
    <scope>INTERACTION WITH HUMAN MAVS (SERINE PROTEASE/HELICASE NS3)</scope>
    <scope>FUNCTION (SERINE PROTEASE/HELICASE NS3)</scope>
</reference>
<feature type="chain" id="PRO_0000450895" description="Genome polyprotein">
    <location>
        <begin position="1"/>
        <end position="2864"/>
    </location>
</feature>
<feature type="chain" id="PRO_0000037678" description="Core protein" evidence="8">
    <location>
        <begin position="1"/>
        <end position="156"/>
    </location>
</feature>
<feature type="chain" id="PRO_0000037679" description="Envelope glycoprotein E1">
    <location>
        <begin position="157"/>
        <end position="349"/>
    </location>
</feature>
<feature type="chain" id="PRO_0000037680" description="Envelope glycoprotein E2">
    <location>
        <begin position="350"/>
        <end position="613"/>
    </location>
</feature>
<feature type="chain" id="PRO_0000037681" description="p13" evidence="19">
    <location>
        <begin position="614"/>
        <end position="732"/>
    </location>
</feature>
<feature type="chain" id="PRO_0000284104" description="p6">
    <location>
        <begin position="614"/>
        <end position="669"/>
    </location>
</feature>
<feature type="chain" id="PRO_0000284105" description="Viroporin p7">
    <location>
        <begin position="670"/>
        <end position="732"/>
    </location>
</feature>
<feature type="chain" id="PRO_0000037682" description="Protease NS2" evidence="12">
    <location>
        <begin position="733"/>
        <end position="940"/>
    </location>
</feature>
<feature type="chain" id="PRO_0000037683" description="Serine protease/helicase NS3">
    <location>
        <begin position="941"/>
        <end position="1564"/>
    </location>
</feature>
<feature type="chain" id="PRO_0000037684" description="Non-structural protein 4A">
    <location>
        <begin position="1565"/>
        <end position="1615"/>
    </location>
</feature>
<feature type="chain" id="PRO_0000037685" description="Non-structural protein 4B">
    <location>
        <begin position="1616"/>
        <end position="1863"/>
    </location>
</feature>
<feature type="chain" id="PRO_0000037686" description="Non-structural protein 5A">
    <location>
        <begin position="1864"/>
        <end position="2274"/>
    </location>
</feature>
<feature type="chain" id="PRO_0000037687" description="RNA-directed RNA polymerase">
    <location>
        <begin position="2275"/>
        <end position="2864"/>
    </location>
</feature>
<feature type="transmembrane region" description="Helical" evidence="8">
    <location>
        <begin position="133"/>
        <end position="153"/>
    </location>
</feature>
<feature type="transmembrane region" description="Helical" evidence="8">
    <location>
        <begin position="324"/>
        <end position="344"/>
    </location>
</feature>
<feature type="transmembrane region" description="Helical" evidence="8">
    <location>
        <begin position="582"/>
        <end position="602"/>
    </location>
</feature>
<feature type="transmembrane region" description="Helical" evidence="8">
    <location>
        <begin position="628"/>
        <end position="648"/>
    </location>
</feature>
<feature type="transmembrane region" description="Helical" evidence="8">
    <location>
        <begin position="660"/>
        <end position="680"/>
    </location>
</feature>
<feature type="transmembrane region" description="Helical" evidence="8">
    <location>
        <begin position="706"/>
        <end position="726"/>
    </location>
</feature>
<feature type="transmembrane region" description="Helical" evidence="8">
    <location>
        <begin position="737"/>
        <end position="757"/>
    </location>
</feature>
<feature type="transmembrane region" description="Helical" evidence="8">
    <location>
        <begin position="790"/>
        <end position="810"/>
    </location>
</feature>
<feature type="transmembrane region" description="Helical" evidence="8">
    <location>
        <begin position="847"/>
        <end position="867"/>
    </location>
</feature>
<feature type="transmembrane region" description="Helical" evidence="8">
    <location>
        <begin position="1565"/>
        <end position="1585"/>
    </location>
</feature>
<feature type="transmembrane region" description="Helical" evidence="8">
    <location>
        <begin position="1653"/>
        <end position="1673"/>
    </location>
</feature>
<feature type="transmembrane region" description="Helical" evidence="8">
    <location>
        <begin position="1678"/>
        <end position="1698"/>
    </location>
</feature>
<feature type="transmembrane region" description="Helical" evidence="8">
    <location>
        <begin position="1722"/>
        <end position="1742"/>
    </location>
</feature>
<feature type="transmembrane region" description="Helical" evidence="8">
    <location>
        <begin position="1783"/>
        <end position="1803"/>
    </location>
</feature>
<feature type="transmembrane region" description="Helical" evidence="8">
    <location>
        <begin position="1864"/>
        <end position="1884"/>
    </location>
</feature>
<feature type="transmembrane region" description="Helical" evidence="8">
    <location>
        <begin position="2844"/>
        <end position="2864"/>
    </location>
</feature>
<feature type="domain" description="Peptidase C18" evidence="12">
    <location>
        <begin position="819"/>
        <end position="940"/>
    </location>
</feature>
<feature type="domain" description="Peptidase S29" evidence="13">
    <location>
        <begin position="941"/>
        <end position="1122"/>
    </location>
</feature>
<feature type="domain" description="Helicase ATP-binding" evidence="10">
    <location>
        <begin position="1131"/>
        <end position="1281"/>
    </location>
</feature>
<feature type="domain" description="Helicase C-terminal" evidence="11">
    <location>
        <begin position="1284"/>
        <end position="1449"/>
    </location>
</feature>
<feature type="domain" description="RdRp catalytic" evidence="9">
    <location>
        <begin position="2485"/>
        <end position="2603"/>
    </location>
</feature>
<feature type="region of interest" description="Disordered" evidence="14">
    <location>
        <begin position="1"/>
        <end position="49"/>
    </location>
</feature>
<feature type="region of interest" description="Disordered" evidence="14">
    <location>
        <begin position="2139"/>
        <end position="2178"/>
    </location>
</feature>
<feature type="region of interest" description="Disordered" evidence="14">
    <location>
        <begin position="2209"/>
        <end position="2266"/>
    </location>
</feature>
<feature type="short sequence motif" description="DECH box" evidence="6">
    <location>
        <begin position="1228"/>
        <end position="1231"/>
    </location>
</feature>
<feature type="compositionally biased region" description="Polar residues" evidence="14">
    <location>
        <begin position="1"/>
        <end position="10"/>
    </location>
</feature>
<feature type="compositionally biased region" description="Polar residues" evidence="14">
    <location>
        <begin position="21"/>
        <end position="32"/>
    </location>
</feature>
<feature type="compositionally biased region" description="Polar residues" evidence="14">
    <location>
        <begin position="2226"/>
        <end position="2240"/>
    </location>
</feature>
<feature type="active site" description="For protease NS2 activity; shared with dimeric partner" evidence="12">
    <location>
        <position position="870"/>
    </location>
</feature>
<feature type="active site" description="For protease NS2 activity; shared with dimeric partner" evidence="12">
    <location>
        <position position="888"/>
    </location>
</feature>
<feature type="active site" description="For protease NS2 activity; shared with dimeric partner" evidence="12">
    <location>
        <position position="909"/>
    </location>
</feature>
<feature type="active site" description="Charge relay system; for serine protease NS3 activity" evidence="13">
    <location>
        <position position="997"/>
    </location>
</feature>
<feature type="active site" description="Charge relay system; for serine protease NS3 activity" evidence="13">
    <location>
        <position position="1021"/>
    </location>
</feature>
<feature type="active site" description="Charge relay system; for serine protease NS3 activity" evidence="13">
    <location>
        <position position="1079"/>
    </location>
</feature>
<feature type="binding site" evidence="13">
    <location>
        <position position="1037"/>
    </location>
    <ligand>
        <name>Zn(2+)</name>
        <dbReference type="ChEBI" id="CHEBI:29105"/>
        <label>1</label>
        <note>structural; for NS3 protease activity and NS2/3 auto-cleavage activity</note>
    </ligand>
</feature>
<feature type="binding site" evidence="13">
    <location>
        <position position="1039"/>
    </location>
    <ligand>
        <name>Zn(2+)</name>
        <dbReference type="ChEBI" id="CHEBI:29105"/>
        <label>1</label>
        <note>structural; for NS3 protease activity and NS2/3 auto-cleavage activity</note>
    </ligand>
</feature>
<feature type="binding site" evidence="13">
    <location>
        <position position="1085"/>
    </location>
    <ligand>
        <name>Zn(2+)</name>
        <dbReference type="ChEBI" id="CHEBI:29105"/>
        <label>1</label>
        <note>structural; for NS3 protease activity and NS2/3 auto-cleavage activity</note>
    </ligand>
</feature>
<feature type="binding site" evidence="13">
    <location>
        <position position="1089"/>
    </location>
    <ligand>
        <name>Zn(2+)</name>
        <dbReference type="ChEBI" id="CHEBI:29105"/>
        <label>1</label>
        <note>structural; for NS3 protease activity and NS2/3 auto-cleavage activity</note>
    </ligand>
</feature>
<feature type="binding site" evidence="19">
    <location>
        <begin position="1144"/>
        <end position="1151"/>
    </location>
    <ligand>
        <name>ATP</name>
        <dbReference type="ChEBI" id="CHEBI:30616"/>
    </ligand>
</feature>
<feature type="binding site" evidence="7">
    <location>
        <position position="1151"/>
    </location>
    <ligand>
        <name>Mg(2+)</name>
        <dbReference type="ChEBI" id="CHEBI:18420"/>
        <label>1</label>
        <note>catalytic; for NS3 helicase activity</note>
    </ligand>
</feature>
<feature type="binding site" evidence="7">
    <location>
        <position position="1229"/>
    </location>
    <ligand>
        <name>Mg(2+)</name>
        <dbReference type="ChEBI" id="CHEBI:18420"/>
        <label>1</label>
        <note>catalytic; for NS3 helicase activity</note>
    </ligand>
</feature>
<feature type="binding site" evidence="7">
    <location>
        <position position="1905"/>
    </location>
    <ligand>
        <name>Zn(2+)</name>
        <dbReference type="ChEBI" id="CHEBI:29105"/>
        <label>2</label>
        <note>structural</note>
    </ligand>
</feature>
<feature type="binding site" evidence="7">
    <location>
        <position position="1923"/>
    </location>
    <ligand>
        <name>Zn(2+)</name>
        <dbReference type="ChEBI" id="CHEBI:29105"/>
        <label>2</label>
        <note>structural</note>
    </ligand>
</feature>
<feature type="binding site" evidence="7">
    <location>
        <position position="1925"/>
    </location>
    <ligand>
        <name>Zn(2+)</name>
        <dbReference type="ChEBI" id="CHEBI:29105"/>
        <label>2</label>
        <note>structural</note>
    </ligand>
</feature>
<feature type="binding site" evidence="7">
    <location>
        <position position="1947"/>
    </location>
    <ligand>
        <name>Zn(2+)</name>
        <dbReference type="ChEBI" id="CHEBI:29105"/>
        <label>2</label>
        <note>structural</note>
    </ligand>
</feature>
<feature type="binding site" evidence="3">
    <location>
        <position position="2491"/>
    </location>
    <ligand>
        <name>Mg(2+)</name>
        <dbReference type="ChEBI" id="CHEBI:18420"/>
        <label>2</label>
        <note>catalytic; for RNA-directed RNA polymerase activity</note>
    </ligand>
</feature>
<feature type="binding site" evidence="3">
    <location>
        <position position="2589"/>
    </location>
    <ligand>
        <name>Mg(2+)</name>
        <dbReference type="ChEBI" id="CHEBI:18420"/>
        <label>2</label>
        <note>catalytic; for RNA-directed RNA polymerase activity</note>
    </ligand>
</feature>
<feature type="binding site" evidence="3">
    <location>
        <position position="2590"/>
    </location>
    <ligand>
        <name>Mg(2+)</name>
        <dbReference type="ChEBI" id="CHEBI:18420"/>
        <label>2</label>
        <note>catalytic; for RNA-directed RNA polymerase activity</note>
    </ligand>
</feature>
<feature type="site" description="Cleavage; by host signal peptidase" evidence="2">
    <location>
        <begin position="156"/>
        <end position="157"/>
    </location>
</feature>
<feature type="site" description="Cleavage; by host signal peptidase" evidence="2">
    <location>
        <begin position="349"/>
        <end position="350"/>
    </location>
</feature>
<feature type="site" description="Cleavage; by host signal peptidase" evidence="19">
    <location>
        <begin position="613"/>
        <end position="614"/>
    </location>
</feature>
<feature type="site" description="Cleavage; by host signal peptidase" evidence="8">
    <location>
        <begin position="669"/>
        <end position="670"/>
    </location>
</feature>
<feature type="site" description="Cleavage; by host signal peptidase" evidence="19">
    <location>
        <begin position="732"/>
        <end position="733"/>
    </location>
</feature>
<feature type="site" description="Cleavage; by protease NS2" evidence="12">
    <location>
        <begin position="940"/>
        <end position="941"/>
    </location>
</feature>
<feature type="site" description="Cleavage; by serine protease NS3" evidence="5">
    <location>
        <begin position="1564"/>
        <end position="1565"/>
    </location>
</feature>
<feature type="site" description="Cleavage; by serine protease NS3" evidence="5">
    <location>
        <begin position="1615"/>
        <end position="1616"/>
    </location>
</feature>
<feature type="site" description="Cleavage; by serine protease NS3" evidence="5">
    <location>
        <begin position="1863"/>
        <end position="1864"/>
    </location>
</feature>
<feature type="site" description="Cleavage; by serine protease NS3" evidence="5">
    <location>
        <begin position="2274"/>
        <end position="2275"/>
    </location>
</feature>
<feature type="lipid moiety-binding region" description="S-palmitoyl cysteine; by host" evidence="5">
    <location>
        <position position="1863"/>
    </location>
</feature>
<feature type="glycosylation site" description="N-linked (GlcNAc...) asparagine; by host" evidence="8">
    <location>
        <position position="165"/>
    </location>
</feature>
<feature type="glycosylation site" description="N-linked (GlcNAc...) asparagine; by host" evidence="8">
    <location>
        <position position="212"/>
    </location>
</feature>
<feature type="glycosylation site" description="N-linked (GlcNAc...) asparagine; by host" evidence="8">
    <location>
        <position position="264"/>
    </location>
</feature>
<feature type="glycosylation site" description="N-linked (GlcNAc...) asparagine; by host" evidence="8">
    <location>
        <position position="380"/>
    </location>
</feature>
<feature type="glycosylation site" description="N-linked (GlcNAc...) asparagine; by host" evidence="8">
    <location>
        <position position="400"/>
    </location>
</feature>
<feature type="glycosylation site" description="N-linked (GlcNAc...) asparagine; by host" evidence="8">
    <location>
        <position position="422"/>
    </location>
</feature>
<feature type="glycosylation site" description="N-linked (GlcNAc...) asparagine; by host" evidence="8">
    <location>
        <position position="446"/>
    </location>
</feature>
<feature type="glycosylation site" description="N-linked (GlcNAc...) asparagine; by host" evidence="8">
    <location>
        <position position="467"/>
    </location>
</feature>
<feature type="glycosylation site" description="N-linked (GlcNAc...) asparagine; by host" evidence="8">
    <location>
        <position position="512"/>
    </location>
</feature>
<feature type="glycosylation site" description="N-linked (GlcNAc...) asparagine; by host" evidence="8">
    <location>
        <position position="782"/>
    </location>
</feature>
<feature type="glycosylation site" description="N-linked (GlcNAc...) asparagine; by host" evidence="8">
    <location>
        <position position="1057"/>
    </location>
</feature>
<feature type="glycosylation site" description="N-linked (GlcNAc...) asparagine; by host" evidence="8">
    <location>
        <position position="1273"/>
    </location>
</feature>
<feature type="glycosylation site" description="N-linked (GlcNAc...) asparagine; by host" evidence="8">
    <location>
        <position position="1559"/>
    </location>
</feature>
<feature type="glycosylation site" description="N-linked (GlcNAc...) asparagine; by host" evidence="8">
    <location>
        <position position="2640"/>
    </location>
</feature>
<feature type="glycosylation site" description="N-linked (GlcNAc...) asparagine; by host" evidence="8">
    <location>
        <position position="2722"/>
    </location>
</feature>
<feature type="sequence variant">
    <original>V</original>
    <variation>I</variation>
    <location>
        <position position="395"/>
    </location>
</feature>
<feature type="sequence variant">
    <original>D</original>
    <variation>N</variation>
    <location>
        <position position="703"/>
    </location>
</feature>
<feature type="sequence variant">
    <original>P</original>
    <variation>H</variation>
    <location>
        <position position="706"/>
    </location>
</feature>
<feature type="sequence variant">
    <original>A</original>
    <variation>V</variation>
    <location>
        <position position="727"/>
    </location>
</feature>
<feature type="sequence variant">
    <original>L</original>
    <variation>F</variation>
    <location>
        <position position="791"/>
    </location>
</feature>
<feature type="sequence variant">
    <original>T</original>
    <variation>A</variation>
    <location>
        <position position="804"/>
    </location>
</feature>
<feature type="sequence variant">
    <original>T</original>
    <variation>M</variation>
    <location>
        <position position="940"/>
    </location>
</feature>
<feature type="sequence variant">
    <original>F</original>
    <variation>L</variation>
    <location>
        <position position="1879"/>
    </location>
</feature>
<feature type="sequence variant">
    <original>V</original>
    <variation>A</variation>
    <location>
        <position position="1895"/>
    </location>
</feature>
<feature type="sequence variant">
    <original>L</original>
    <variation>P</variation>
    <location>
        <position position="1919"/>
    </location>
</feature>
<feature type="sequence variant">
    <original>R</original>
    <variation>K</variation>
    <location>
        <position position="1945"/>
    </location>
</feature>
<feature type="sequence variant">
    <original>R</original>
    <variation>G</variation>
    <location>
        <position position="1966"/>
    </location>
</feature>
<feature type="sequence variant">
    <original>T</original>
    <variation>P</variation>
    <location>
        <position position="1973"/>
    </location>
</feature>
<feature type="sequence variant">
    <original>Y</original>
    <variation>C</variation>
    <location>
        <position position="1979"/>
    </location>
</feature>
<feature type="sequence variant">
    <original>L</original>
    <variation>M</variation>
    <location>
        <position position="1990"/>
    </location>
</feature>
<feature type="sequence variant">
    <original>K</original>
    <variation>Q</variation>
    <location>
        <position position="2052"/>
    </location>
</feature>
<feature type="sequence variant">
    <original>I</original>
    <variation>T</variation>
    <location>
        <position position="2082"/>
    </location>
</feature>
<feature type="sequence variant">
    <original>L</original>
    <variation>P</variation>
    <location>
        <position position="2095"/>
    </location>
</feature>
<feature type="sequence variant">
    <original>F</original>
    <variation>I</variation>
    <location>
        <position position="2097"/>
    </location>
</feature>
<feature type="sequence variant">
    <original>S</original>
    <variation>P</variation>
    <location>
        <position position="2174"/>
    </location>
</feature>
<feature type="sequence variant">
    <original>F</original>
    <variation>L</variation>
    <location>
        <position position="2196"/>
    </location>
</feature>
<feature type="sequence variant">
    <original>C</original>
    <variation>R</variation>
    <location>
        <position position="2201"/>
    </location>
</feature>
<feature type="sequence variant">
    <original>M</original>
    <variation>V</variation>
    <location>
        <position position="2203"/>
    </location>
</feature>
<feature type="sequence variant">
    <original>E</original>
    <variation>G</variation>
    <location>
        <position position="2221"/>
    </location>
</feature>
<feature type="sequence variant">
    <original>G</original>
    <variation>E</variation>
    <location>
        <position position="2228"/>
    </location>
</feature>
<feature type="sequence variant">
    <original>T</original>
    <variation>A</variation>
    <location>
        <position position="2233"/>
    </location>
</feature>
<feature type="sequence variant">
    <original>P</original>
    <variation>L</variation>
    <location>
        <position position="2244"/>
    </location>
</feature>
<feature type="sequence variant">
    <original>G</original>
    <variation>E</variation>
    <location>
        <position position="2268"/>
    </location>
</feature>
<feature type="sequence variant">
    <original>E</original>
    <variation>K</variation>
    <location>
        <position position="2271"/>
    </location>
</feature>
<feature type="sequence variant">
    <original>V</original>
    <variation>I</variation>
    <location>
        <position position="2833"/>
    </location>
</feature>
<feature type="mutagenesis site" description="Reduces cleavage between E2 and p13." evidence="17">
    <original>G</original>
    <variation>A</variation>
    <location>
        <position position="613"/>
    </location>
</feature>
<feature type="mutagenesis site" description="Reduces cleavage between E2 and p13." evidence="17">
    <original>G</original>
    <variation>N</variation>
    <location>
        <position position="669"/>
    </location>
</feature>
<feature type="mutagenesis site" description="Reduces cleavage between p13 and NS2-3." evidence="17">
    <original>ASA</original>
    <variation>NSN</variation>
    <location>
        <begin position="730"/>
        <end position="732"/>
    </location>
</feature>
<feature type="mutagenesis site" description="Complete loss of ATPase and dsRNA unwinding activities." evidence="15">
    <original>K</original>
    <variation>A</variation>
    <location>
        <position position="1150"/>
    </location>
</feature>
<feature type="helix" evidence="21">
    <location>
        <begin position="745"/>
        <end position="761"/>
    </location>
</feature>
<feature type="turn" evidence="22">
    <location>
        <begin position="766"/>
        <end position="768"/>
    </location>
</feature>
<feature type="helix" evidence="22">
    <location>
        <begin position="769"/>
        <end position="785"/>
    </location>
</feature>
<feature type="helix" evidence="23">
    <location>
        <begin position="849"/>
        <end position="865"/>
    </location>
</feature>
<protein>
    <recommendedName>
        <fullName>Genome polyprotein</fullName>
    </recommendedName>
    <component>
        <recommendedName>
            <fullName>Core protein</fullName>
        </recommendedName>
    </component>
    <component>
        <recommendedName>
            <fullName>Envelope glycoprotein E1</fullName>
        </recommendedName>
    </component>
    <component>
        <recommendedName>
            <fullName>Envelope glycoprotein E2</fullName>
        </recommendedName>
        <alternativeName>
            <fullName>NS1</fullName>
        </alternativeName>
    </component>
    <component>
        <recommendedName>
            <fullName>p13</fullName>
        </recommendedName>
    </component>
    <component>
        <recommendedName>
            <fullName>p6</fullName>
        </recommendedName>
    </component>
    <component>
        <recommendedName>
            <fullName>Viroporin p7</fullName>
        </recommendedName>
    </component>
    <component>
        <recommendedName>
            <fullName>Protease NS2</fullName>
            <ecNumber evidence="3">3.4.22.-</ecNumber>
        </recommendedName>
        <alternativeName>
            <fullName>Non-structural protein 2</fullName>
            <shortName>NS2</shortName>
        </alternativeName>
    </component>
    <component>
        <recommendedName>
            <fullName>Serine protease/helicase NS3</fullName>
            <ecNumber evidence="5">3.4.21.98</ecNumber>
            <ecNumber evidence="15">3.6.1.15</ecNumber>
            <ecNumber evidence="15">3.6.4.13</ecNumber>
        </recommendedName>
        <alternativeName>
            <fullName>Hepacivirin</fullName>
        </alternativeName>
        <alternativeName>
            <fullName evidence="5">NS3 helicase</fullName>
        </alternativeName>
        <alternativeName>
            <fullName evidence="5">NS3 protease</fullName>
        </alternativeName>
        <alternativeName>
            <fullName>NS3P</fullName>
        </alternativeName>
    </component>
    <component>
        <recommendedName>
            <fullName>Non-structural protein 4A</fullName>
            <shortName>NS4A</shortName>
        </recommendedName>
    </component>
    <component>
        <recommendedName>
            <fullName>Non-structural protein 4B</fullName>
            <shortName>NS4B</shortName>
        </recommendedName>
    </component>
    <component>
        <recommendedName>
            <fullName>Non-structural protein 5A</fullName>
            <shortName>NS5A</shortName>
        </recommendedName>
    </component>
    <component>
        <recommendedName>
            <fullName>RNA-directed RNA polymerase</fullName>
            <ecNumber evidence="5">2.7.7.48</ecNumber>
        </recommendedName>
        <alternativeName>
            <fullName>NS5B</fullName>
        </alternativeName>
    </component>
</protein>
<comment type="function">
    <molecule>Core protein</molecule>
    <text evidence="2 5 6 19">Packages viral RNA to form a viral nucleocapsid, and promotes virion budding (Probable). Participates in the viral particle production as a result of its interaction with the non-structural protein 5A (By similarity). Binds RNA and may function as a RNA chaperone to induce the RNA structural rearrangements taking place during virus replication (By similarity). Modulates viral translation initiation by interacting with viral IRES and 40S ribosomal subunit (By similarity). Probably affects various cell signaling pathways, host immunity and lipid metabolism (Probable).</text>
</comment>
<comment type="function">
    <molecule>Envelope glycoprotein E1</molecule>
    <text evidence="5">Forms a heterodimer with envelope glycoprotein E2, which mediates virus attachment to the host cell, virion internalization through clathrin-dependent endocytosis and fusion with host membrane (By similarity). Fusion with the host cell is most likely mediated by both E1 and E2, through conformational rearrangements of the heterodimer required for fusion rather than a classical class II fusion mechanism (By similarity).</text>
</comment>
<comment type="function">
    <molecule>Envelope glycoprotein E2</molecule>
    <text evidence="5">Forms a heterodimer with envelope glycoprotein E1, which mediates virus attachment to the host cell, virion internalization through clathrin-dependent endocytosis and fusion with host membrane (By similarity). Fusion with the host cell is most likely mediated by both E1 and E2, through conformational rearrangements of the heterodimer required for fusion rather than a classical class II fusion mechanism (By similarity).</text>
</comment>
<comment type="function">
    <molecule>p13</molecule>
    <text evidence="17">May function as a multimeric ion channel protein (viroporin).</text>
</comment>
<comment type="function">
    <molecule>Protease NS2</molecule>
    <text evidence="3 5">Cysteine protease required for the proteolytic auto-cleavage between the non-structural proteins NS2 and NS3 (By similarity). The N-terminus of NS3 is required for the function of NS2 protease (active region NS2-3) (By similarity). Promotes the initiation of viral particle assembly by mediating the interaction between structural and non-structural proteins (By similarity).</text>
</comment>
<comment type="function">
    <molecule>Serine protease/helicase NS3</molecule>
    <text evidence="5 15 18">Displays three enzymatic activities: serine protease with a chymotrypsin-like fold, NTPase and RNA helicase (PubMed:10497107). NS3 serine protease, in association with NS4A, is responsible for the cleavages of NS3-NS4A, NS4A-NS4B, NS4B-NS5A and NS5A-NS5B (By similarity). The NS3/NS4A complex prevents phosphorylation of host IRF3, thus preventing the establishment of dsRNA induced antiviral state (By similarity). NS3 RNA helicase binds to RNA and unwinds both dsDNA and dsRNA in the 3' to 5' direction, and likely resolves RNA complicated stable secondary structures in the template strand (By similarity). Cleaves host MAVS/CARDIF thereby preventing the establishment of an antiviral state (PubMed:17093192).</text>
</comment>
<comment type="function">
    <molecule>Non-structural protein 4B</molecule>
    <text evidence="5">Induces a specific membrane alteration that serves as a scaffold for the virus replication complex (By similarity). This membrane alteration gives rise to the so-called ER-derived membranous web that contains the replication complex (By similarity). NS4B self-interaction contributes to its function in membranous web formation (By similarity).</text>
</comment>
<comment type="function">
    <molecule>Non-structural protein 5A</molecule>
    <text evidence="6">Phosphorylated protein that is indispensable for viral replication and assembly.</text>
</comment>
<comment type="function">
    <molecule>RNA-directed RNA polymerase</molecule>
    <text evidence="5">RNA-dependent RNA polymerase that performs primer-template recognition and RNA synthesis during viral replication. Initiates RNA transcription/replication at a flavin adenine dinucleotide (FAD), resulting in a 5'- FAD cap on viral RNAs. In this way, recognition of viral 5' RNA by host pattern recognition receptors can be bypassed, thereby evading activation of antiviral pathways.</text>
</comment>
<comment type="catalytic activity">
    <molecule>Serine protease/helicase NS3</molecule>
    <reaction evidence="5">
        <text>Hydrolysis of four peptide bonds in the viral precursor polyprotein, commonly with Asp or Glu in the P6 position, Cys or Thr in P1 and Ser or Ala in P1'.</text>
        <dbReference type="EC" id="3.4.21.98"/>
    </reaction>
</comment>
<comment type="catalytic activity">
    <molecule>Serine protease/helicase NS3</molecule>
    <reaction evidence="15">
        <text>a ribonucleoside 5'-triphosphate + H2O = a ribonucleoside 5'-diphosphate + phosphate + H(+)</text>
        <dbReference type="Rhea" id="RHEA:23680"/>
        <dbReference type="ChEBI" id="CHEBI:15377"/>
        <dbReference type="ChEBI" id="CHEBI:15378"/>
        <dbReference type="ChEBI" id="CHEBI:43474"/>
        <dbReference type="ChEBI" id="CHEBI:57930"/>
        <dbReference type="ChEBI" id="CHEBI:61557"/>
        <dbReference type="EC" id="3.6.1.15"/>
    </reaction>
</comment>
<comment type="catalytic activity">
    <molecule>Serine protease/helicase NS3</molecule>
    <reaction evidence="15">
        <text>ATP + H2O = ADP + phosphate + H(+)</text>
        <dbReference type="Rhea" id="RHEA:13065"/>
        <dbReference type="ChEBI" id="CHEBI:15377"/>
        <dbReference type="ChEBI" id="CHEBI:15378"/>
        <dbReference type="ChEBI" id="CHEBI:30616"/>
        <dbReference type="ChEBI" id="CHEBI:43474"/>
        <dbReference type="ChEBI" id="CHEBI:456216"/>
        <dbReference type="EC" id="3.6.4.13"/>
    </reaction>
</comment>
<comment type="catalytic activity">
    <molecule>RNA-directed RNA polymerase</molecule>
    <reaction evidence="9">
        <text>RNA(n) + a ribonucleoside 5'-triphosphate = RNA(n+1) + diphosphate</text>
        <dbReference type="Rhea" id="RHEA:21248"/>
        <dbReference type="Rhea" id="RHEA-COMP:14527"/>
        <dbReference type="Rhea" id="RHEA-COMP:17342"/>
        <dbReference type="ChEBI" id="CHEBI:33019"/>
        <dbReference type="ChEBI" id="CHEBI:61557"/>
        <dbReference type="ChEBI" id="CHEBI:140395"/>
        <dbReference type="EC" id="2.7.7.48"/>
    </reaction>
</comment>
<comment type="cofactor">
    <molecule>Protease NS2</molecule>
    <cofactor evidence="3">
        <name>Zn(2+)</name>
        <dbReference type="ChEBI" id="CHEBI:29105"/>
    </cofactor>
    <text evidence="3">Activity of protease NS2 is dependent on zinc ions and completely inhibited by EDTA. This is probably due to the fact that NS2 protease activity needs NS3 N-terminus that binds a zinc atom (active region NS2-3).</text>
</comment>
<comment type="cofactor">
    <molecule>Serine protease/helicase NS3</molecule>
    <cofactor evidence="3">
        <name>Zn(2+)</name>
        <dbReference type="ChEBI" id="CHEBI:29105"/>
    </cofactor>
    <cofactor evidence="15">
        <name>Mg(2+)</name>
        <dbReference type="ChEBI" id="CHEBI:18420"/>
    </cofactor>
    <cofactor evidence="15">
        <name>Mn(2+)</name>
        <dbReference type="ChEBI" id="CHEBI:29035"/>
    </cofactor>
    <text evidence="3 15">Binds 1 zinc ion, which has a structural role (By similarity). Magnesium or manganese ions are essential for the helicase activity (PubMed:10497107).</text>
</comment>
<comment type="biophysicochemical properties">
    <kinetics>
        <KM>0.64 mM for ATP for NS3 NTPase</KM>
        <KM>1.41 mM for CTP for NS3 NTPase</KM>
        <KM>1.12 mM for UTP for NS3 NTPase</KM>
        <KM>1.87 mM for dATP for NS3 NTPase</KM>
        <KM>1.22 mM for dCTP for NS3 NTPase</KM>
        <KM>0.65 mM for dTTP for NS3 NTPase</KM>
    </kinetics>
    <phDependence>
        <text evidence="15">Stable from 6 to 8.5.</text>
    </phDependence>
</comment>
<comment type="subunit">
    <molecule>Core protein</molecule>
    <text evidence="4 5 6">Homooligomer (By similarity). Interacts with E1 (via C-terminus) (By similarity). Interacts with the non-structural protein 5A (By similarity). Part of the viral assembly initiation complex composed of NS2, E1, E2, NS3, NS4A, NS5A and the core protein (By similarity).</text>
</comment>
<comment type="subunit">
    <molecule>Envelope glycoprotein E1</molecule>
    <text evidence="5 6">Forms a heterodimer with envelope glycoprotein E2 (By similarity). Interacts with the core protein (By similarity). Interacts with protease NS2 (By similarity). Part of the viral assembly initiation complex composed of NS2, E1, E2, NS3, NS4A, NS5A and the core protein (By similarity).</text>
</comment>
<comment type="subunit">
    <molecule>Envelope glycoprotein E2</molecule>
    <text evidence="5 6">Forms a heterodimer with envelope glycoprotein E1 (By similarity). Part of the viral assembly initiation complex composed of NS2, E1, E2, NS3, NS4A, NS5A and the core protein (By similarity).</text>
</comment>
<comment type="subunit">
    <molecule>Protease NS2</molecule>
    <text evidence="5 6">Homodimer (By similarity). Interacts with envelope glycoprotein E1 (By similarity). Interacts with envelope glycoprotein E2 (By similarity). Interacts with viroporin p7 (By similarity). Interacts with serine protease/helicase NS3 (By similarity). Part of the replication complex composed of NS2, NS3, NS4A, NS4B, NS5A and the RNA-directed RNA polymerase embedded in an ER-derived membranous web (By similarity). Part of the viral assembly initiation complex composed of NS2, E1, E2, NS3, NS4A, NS5A and the core protein (By similarity).</text>
</comment>
<comment type="subunit">
    <molecule>Serine protease/helicase NS3</molecule>
    <text evidence="3 5 6 20">Interacts with protease NS2 (By similarity). Interacts with non-structural protein 4A; this interaction stabilizes the folding of NS3 serine protease (By similarity). NS3-NS4A interaction is essential for NS3 activation and allows membrane anchorage of the latter (By similarity). Interacts with host MAVS; this interaction leads to the cleavage and inhibition of host MAVS (Probable). Part of the replication complex composed of NS2, NS3, NS4A, NS4B, NS5A and the RNA-directed RNA polymerase embedded in an ER-derived membranous web (By similarity). Part of the viral assembly initiation complex composed of NS2, E1, E2, NS3, NS4A, NS5A and the core protein (By similarity).</text>
</comment>
<comment type="subunit">
    <molecule>Non-structural protein 4A</molecule>
    <text evidence="2 3 5 6">Interacts with NS3 serine protease; this interaction stabilizes the folding of NS3 serine protease (By similarity). NS3-NS4A interaction is essential for NS3 activation and allows membrane anchorage of the latter (By similarity). Interacts with non-structural protein 5A (via N-terminus) (By similarity). Part of the replication complex composed of NS2, NS3, NS4A, NS4B, NS5A and the RNA-directed RNA polymerase embedded in an ER-derived membranous web (By similarity). Part of the viral assembly initiation complex composed of NS2, E1, E2, NS3, NS4A, NS5A and the core protein (By similarity).</text>
</comment>
<comment type="subunit">
    <molecule>Non-structural protein 5A</molecule>
    <text evidence="2 5 6">Monomer (By similarity). Homodimer; dimerization is required for RNA-binding (By similarity). Interacts with the core protein (By similarity). Interacts (via N-terminus) with non-structural protein 4A (By similarity). Interacts with non-structural protein 4B (By similarity). Interacts with RNA-directed RNA polymerase (By similarity). Part of the viral assembly initiation complex composed of NS2, E1, E2, NS3, NS4A, NS5A and the core protein (By similarity). Part of the replication complex composed of NS2, NS3, NS4A, NS4B, NS5A and the RNA-directed RNA polymerase (By similarity).</text>
</comment>
<comment type="subcellular location">
    <molecule>Core protein</molecule>
    <subcellularLocation>
        <location evidence="6">Virion</location>
    </subcellularLocation>
    <subcellularLocation>
        <location evidence="6">Host cytoplasm</location>
    </subcellularLocation>
    <subcellularLocation>
        <location evidence="6">Host lipid droplet</location>
    </subcellularLocation>
    <text evidence="5">Only a minor proportion of core protein is present in the nucleus (By similarity). Probably present on the surface of lipid droplets (By similarity).</text>
</comment>
<comment type="subcellular location">
    <molecule>Envelope glycoprotein E1</molecule>
    <subcellularLocation>
        <location evidence="19">Virion membrane</location>
        <topology evidence="19">Single-pass type I membrane protein</topology>
    </subcellularLocation>
    <subcellularLocation>
        <location>Host endoplasmic reticulum membrane</location>
        <topology evidence="5">Single-pass type I membrane protein</topology>
    </subcellularLocation>
    <text evidence="5">The C-terminal transmembrane domain acts as a signal sequence and forms a hairpin structure before cleavage by host signal peptidase (By similarity). After cleavage, the membrane sequence is retained at the C-terminus of the protein, serving as ER membrane anchor (By similarity). A reorientation of the second hydrophobic stretch occurs after cleavage producing a single reoriented transmembrane domain (By similarity). These events explain the final topology of the protein (By similarity).</text>
</comment>
<comment type="subcellular location">
    <molecule>Envelope glycoprotein E2</molecule>
    <subcellularLocation>
        <location evidence="19">Virion membrane</location>
        <topology evidence="19">Single-pass type I membrane protein</topology>
    </subcellularLocation>
    <subcellularLocation>
        <location>Host endoplasmic reticulum membrane</location>
        <topology evidence="5">Single-pass type I membrane protein</topology>
    </subcellularLocation>
    <subcellularLocation>
        <location evidence="7">Host lipid droplet</location>
    </subcellularLocation>
    <text evidence="5">The C-terminal transmembrane domain acts as a signal sequence and forms a hairpin structure before cleavage by host signal peptidase (By similarity). After cleavage, the membrane sequence is retained at the C-terminus of the protein, serving as ER membrane anchor (By similarity). A reorientation of the second hydrophobic stretch occurs after cleavage producing a single reoriented transmembrane domain (By similarity). These events explain the final topology of the protein (By similarity).</text>
</comment>
<comment type="subcellular location">
    <molecule>p13</molecule>
    <subcellularLocation>
        <location evidence="1">Host endoplasmic reticulum membrane</location>
        <topology evidence="1">Multi-pass membrane protein</topology>
    </subcellularLocation>
</comment>
<comment type="subcellular location">
    <molecule>Protease NS2</molecule>
    <subcellularLocation>
        <location evidence="5">Host endoplasmic reticulum membrane</location>
        <topology evidence="5">Multi-pass membrane protein</topology>
    </subcellularLocation>
    <subcellularLocation>
        <location evidence="7">Host lipid droplet</location>
    </subcellularLocation>
    <text evidence="6">Probably present on the surface of lipid droplets.</text>
</comment>
<comment type="subcellular location">
    <molecule>Serine protease/helicase NS3</molecule>
    <subcellularLocation>
        <location evidence="19">Host endoplasmic reticulum membrane</location>
        <topology evidence="19">Peripheral membrane protein</topology>
    </subcellularLocation>
    <text evidence="19">NS3 is associated to the ER membrane through its binding to NS4A.</text>
</comment>
<comment type="subcellular location">
    <molecule>Non-structural protein 4A</molecule>
    <subcellularLocation>
        <location evidence="19">Host endoplasmic reticulum membrane</location>
        <topology evidence="19">Single-pass type I membrane protein</topology>
    </subcellularLocation>
    <text>Host membrane insertion occurs after processing by the NS3 protease.</text>
</comment>
<comment type="subcellular location">
    <molecule>Non-structural protein 4B</molecule>
    <subcellularLocation>
        <location evidence="5">Host endoplasmic reticulum membrane</location>
        <topology evidence="5">Multi-pass membrane protein</topology>
    </subcellularLocation>
    <text evidence="5">A reorientation of the N-terminus into the ER lumen occurs post-translationally.</text>
</comment>
<comment type="subcellular location">
    <molecule>Non-structural protein 5A</molecule>
    <subcellularLocation>
        <location evidence="5">Host endoplasmic reticulum membrane</location>
        <topology evidence="5">Peripheral membrane protein</topology>
    </subcellularLocation>
    <subcellularLocation>
        <location evidence="5">Host cytoplasm</location>
        <location evidence="5">Host perinuclear region</location>
    </subcellularLocation>
    <subcellularLocation>
        <location evidence="2">Host mitochondrion</location>
    </subcellularLocation>
    <subcellularLocation>
        <location evidence="5">Host cytoplasm</location>
    </subcellularLocation>
    <subcellularLocation>
        <location evidence="2">Host nucleus</location>
    </subcellularLocation>
    <subcellularLocation>
        <location evidence="7">Host lipid droplet</location>
    </subcellularLocation>
    <text evidence="2 5">Host membrane insertion occurs after processing by the NS3 protease (By similarity). Localizes at the surface of lipid droplets (By similarity).</text>
</comment>
<comment type="subcellular location">
    <molecule>RNA-directed RNA polymerase</molecule>
    <subcellularLocation>
        <location evidence="5">Host cytoplasm</location>
    </subcellularLocation>
    <subcellularLocation>
        <location>Host endoplasmic reticulum membrane</location>
        <topology evidence="5">Single-pass type IV membrane protein</topology>
    </subcellularLocation>
    <text evidence="5">Host membrane insertion occurs after processing by the NS3 protease.</text>
</comment>
<comment type="domain">
    <molecule>Envelope glycoprotein E1</molecule>
    <text evidence="5">The transmembrane regions of envelope E1 and E2 glycoproteins are involved in heterodimer formation, ER localization, and assembly of these proteins.</text>
</comment>
<comment type="domain">
    <molecule>Envelope glycoprotein E2</molecule>
    <text evidence="5">The transmembrane regions of envelope E1 and E2 glycoproteins are involved in heterodimer formation, ER localization, and assembly of these proteins.</text>
</comment>
<comment type="domain">
    <molecule>Protease NS2</molecule>
    <text evidence="3">The N-terminus of NS3 is required for the catalytic activity of protease NS2 (By similarity). The minimal catalytic region includes the C-terminus of NS2 and the N-terminus NS3 protease domain (active region NS2-3) (By similarity).</text>
</comment>
<comment type="domain">
    <molecule>Serine protease/helicase NS3</molecule>
    <text evidence="2 5">The N-terminal one-third contains the protease activity (By similarity). This region contains a zinc atom that does not belong to the active site, but may play a structural rather than a catalytic role (By similarity). This region is essential for the activity of protease NS2, maybe by contributing to the folding of the latter (By similarity). The NTPase/helicase activity is located in the twothirds C-terminus of NS3, this domain contains the NTPase and RNA-binding regions (By similarity).</text>
</comment>
<comment type="domain">
    <molecule>Non-structural protein 4B</molecule>
    <text evidence="6">Contains a glycine zipper region that critically contributes to the biogenesis of functional ER-derived replication organelles.</text>
</comment>
<comment type="domain">
    <molecule>Non-structural protein 5A</molecule>
    <text evidence="5">The N-terminus of NS5A acts as membrane anchor.</text>
</comment>
<comment type="PTM">
    <molecule>Genome polyprotein</molecule>
    <text evidence="4 5 16 17">Specific enzymatic cleavages in vivo yield mature proteins (By similarity). The structural proteins, core, E1, E2 and p7 are produced by proteolytic processing by host signal peptidases (By similarity). The other proteins (p7, NS2, NS3, NS4A, NS4B, NS5A and NS5B) are cleaved by the viral proteases (By similarity). Autoprocessing between NS2 and NS3 is mediated by the NS2 cysteine protease catalytic domain and regulated by the NS3 N-terminal domain (By similarity). P13 may be further cleaved into p6 and p7 if the internal cleavage site is used (PubMed:15060070, PubMed:16492760).</text>
</comment>
<comment type="PTM">
    <molecule>Envelope glycoprotein E1</molecule>
    <text evidence="5">Highly N-glycosylated.</text>
</comment>
<comment type="PTM">
    <molecule>Envelope glycoprotein E2</molecule>
    <text evidence="5">Highly N-glycosylated.</text>
</comment>
<comment type="PTM">
    <molecule>Non-structural protein 4B</molecule>
    <text evidence="5">Palmitoylated. This modification may play a role in its polymerization or in protein-protein interactions.</text>
</comment>
<comment type="miscellaneous">
    <text>Of all animal viruses, GBV-B is the most closely related to HCV.</text>
</comment>
<comment type="caution">
    <text evidence="19">The core gene probably also codes for alternative reading frame proteins (ARFPs). Many functions depicted for the core protein might belong to the ARFPs.</text>
</comment>